<keyword id="KW-0963">Cytoplasm</keyword>
<keyword id="KW-0489">Methyltransferase</keyword>
<keyword id="KW-0698">rRNA processing</keyword>
<keyword id="KW-0949">S-adenosyl-L-methionine</keyword>
<keyword id="KW-0808">Transferase</keyword>
<reference key="1">
    <citation type="submission" date="2007-05" db="EMBL/GenBank/DDBJ databases">
        <title>Complete sequence of Pseudomonas putida F1.</title>
        <authorList>
            <consortium name="US DOE Joint Genome Institute"/>
            <person name="Copeland A."/>
            <person name="Lucas S."/>
            <person name="Lapidus A."/>
            <person name="Barry K."/>
            <person name="Detter J.C."/>
            <person name="Glavina del Rio T."/>
            <person name="Hammon N."/>
            <person name="Israni S."/>
            <person name="Dalin E."/>
            <person name="Tice H."/>
            <person name="Pitluck S."/>
            <person name="Chain P."/>
            <person name="Malfatti S."/>
            <person name="Shin M."/>
            <person name="Vergez L."/>
            <person name="Schmutz J."/>
            <person name="Larimer F."/>
            <person name="Land M."/>
            <person name="Hauser L."/>
            <person name="Kyrpides N."/>
            <person name="Lykidis A."/>
            <person name="Parales R."/>
            <person name="Richardson P."/>
        </authorList>
    </citation>
    <scope>NUCLEOTIDE SEQUENCE [LARGE SCALE GENOMIC DNA]</scope>
    <source>
        <strain>ATCC 700007 / DSM 6899 / JCM 31910 / BCRC 17059 / LMG 24140 / F1</strain>
    </source>
</reference>
<name>RSMH_PSEP1</name>
<dbReference type="EC" id="2.1.1.199" evidence="1"/>
<dbReference type="EMBL" id="CP000712">
    <property type="protein sequence ID" value="ABQ80518.1"/>
    <property type="molecule type" value="Genomic_DNA"/>
</dbReference>
<dbReference type="SMR" id="A5W8Q8"/>
<dbReference type="KEGG" id="ppf:Pput_4395"/>
<dbReference type="eggNOG" id="COG0275">
    <property type="taxonomic scope" value="Bacteria"/>
</dbReference>
<dbReference type="HOGENOM" id="CLU_038422_2_0_6"/>
<dbReference type="GO" id="GO:0005737">
    <property type="term" value="C:cytoplasm"/>
    <property type="evidence" value="ECO:0007669"/>
    <property type="project" value="UniProtKB-SubCell"/>
</dbReference>
<dbReference type="GO" id="GO:0071424">
    <property type="term" value="F:rRNA (cytosine-N4-)-methyltransferase activity"/>
    <property type="evidence" value="ECO:0007669"/>
    <property type="project" value="UniProtKB-UniRule"/>
</dbReference>
<dbReference type="GO" id="GO:0070475">
    <property type="term" value="P:rRNA base methylation"/>
    <property type="evidence" value="ECO:0007669"/>
    <property type="project" value="UniProtKB-UniRule"/>
</dbReference>
<dbReference type="FunFam" id="1.10.150.170:FF:000003">
    <property type="entry name" value="Ribosomal RNA small subunit methyltransferase H"/>
    <property type="match status" value="1"/>
</dbReference>
<dbReference type="Gene3D" id="1.10.150.170">
    <property type="entry name" value="Putative methyltransferase TM0872, insert domain"/>
    <property type="match status" value="1"/>
</dbReference>
<dbReference type="Gene3D" id="3.40.50.150">
    <property type="entry name" value="Vaccinia Virus protein VP39"/>
    <property type="match status" value="1"/>
</dbReference>
<dbReference type="HAMAP" id="MF_01007">
    <property type="entry name" value="16SrRNA_methyltr_H"/>
    <property type="match status" value="1"/>
</dbReference>
<dbReference type="InterPro" id="IPR002903">
    <property type="entry name" value="RsmH"/>
</dbReference>
<dbReference type="InterPro" id="IPR023397">
    <property type="entry name" value="SAM-dep_MeTrfase_MraW_recog"/>
</dbReference>
<dbReference type="InterPro" id="IPR029063">
    <property type="entry name" value="SAM-dependent_MTases_sf"/>
</dbReference>
<dbReference type="NCBIfam" id="TIGR00006">
    <property type="entry name" value="16S rRNA (cytosine(1402)-N(4))-methyltransferase RsmH"/>
    <property type="match status" value="1"/>
</dbReference>
<dbReference type="PANTHER" id="PTHR11265:SF0">
    <property type="entry name" value="12S RRNA N4-METHYLCYTIDINE METHYLTRANSFERASE"/>
    <property type="match status" value="1"/>
</dbReference>
<dbReference type="PANTHER" id="PTHR11265">
    <property type="entry name" value="S-ADENOSYL-METHYLTRANSFERASE MRAW"/>
    <property type="match status" value="1"/>
</dbReference>
<dbReference type="Pfam" id="PF01795">
    <property type="entry name" value="Methyltransf_5"/>
    <property type="match status" value="1"/>
</dbReference>
<dbReference type="PIRSF" id="PIRSF004486">
    <property type="entry name" value="MraW"/>
    <property type="match status" value="1"/>
</dbReference>
<dbReference type="SUPFAM" id="SSF81799">
    <property type="entry name" value="Putative methyltransferase TM0872, insert domain"/>
    <property type="match status" value="1"/>
</dbReference>
<dbReference type="SUPFAM" id="SSF53335">
    <property type="entry name" value="S-adenosyl-L-methionine-dependent methyltransferases"/>
    <property type="match status" value="1"/>
</dbReference>
<feature type="chain" id="PRO_0000387055" description="Ribosomal RNA small subunit methyltransferase H">
    <location>
        <begin position="1"/>
        <end position="315"/>
    </location>
</feature>
<feature type="binding site" evidence="1">
    <location>
        <begin position="37"/>
        <end position="39"/>
    </location>
    <ligand>
        <name>S-adenosyl-L-methionine</name>
        <dbReference type="ChEBI" id="CHEBI:59789"/>
    </ligand>
</feature>
<feature type="binding site" evidence="1">
    <location>
        <position position="57"/>
    </location>
    <ligand>
        <name>S-adenosyl-L-methionine</name>
        <dbReference type="ChEBI" id="CHEBI:59789"/>
    </ligand>
</feature>
<feature type="binding site" evidence="1">
    <location>
        <position position="83"/>
    </location>
    <ligand>
        <name>S-adenosyl-L-methionine</name>
        <dbReference type="ChEBI" id="CHEBI:59789"/>
    </ligand>
</feature>
<feature type="binding site" evidence="1">
    <location>
        <position position="105"/>
    </location>
    <ligand>
        <name>S-adenosyl-L-methionine</name>
        <dbReference type="ChEBI" id="CHEBI:59789"/>
    </ligand>
</feature>
<feature type="binding site" evidence="1">
    <location>
        <position position="112"/>
    </location>
    <ligand>
        <name>S-adenosyl-L-methionine</name>
        <dbReference type="ChEBI" id="CHEBI:59789"/>
    </ligand>
</feature>
<evidence type="ECO:0000255" key="1">
    <source>
        <dbReference type="HAMAP-Rule" id="MF_01007"/>
    </source>
</evidence>
<accession>A5W8Q8</accession>
<organism>
    <name type="scientific">Pseudomonas putida (strain ATCC 700007 / DSM 6899 / JCM 31910 / BCRC 17059 / LMG 24140 / F1)</name>
    <dbReference type="NCBI Taxonomy" id="351746"/>
    <lineage>
        <taxon>Bacteria</taxon>
        <taxon>Pseudomonadati</taxon>
        <taxon>Pseudomonadota</taxon>
        <taxon>Gammaproteobacteria</taxon>
        <taxon>Pseudomonadales</taxon>
        <taxon>Pseudomonadaceae</taxon>
        <taxon>Pseudomonas</taxon>
    </lineage>
</organism>
<comment type="function">
    <text evidence="1">Specifically methylates the N4 position of cytidine in position 1402 (C1402) of 16S rRNA.</text>
</comment>
<comment type="catalytic activity">
    <reaction evidence="1">
        <text>cytidine(1402) in 16S rRNA + S-adenosyl-L-methionine = N(4)-methylcytidine(1402) in 16S rRNA + S-adenosyl-L-homocysteine + H(+)</text>
        <dbReference type="Rhea" id="RHEA:42928"/>
        <dbReference type="Rhea" id="RHEA-COMP:10286"/>
        <dbReference type="Rhea" id="RHEA-COMP:10287"/>
        <dbReference type="ChEBI" id="CHEBI:15378"/>
        <dbReference type="ChEBI" id="CHEBI:57856"/>
        <dbReference type="ChEBI" id="CHEBI:59789"/>
        <dbReference type="ChEBI" id="CHEBI:74506"/>
        <dbReference type="ChEBI" id="CHEBI:82748"/>
        <dbReference type="EC" id="2.1.1.199"/>
    </reaction>
</comment>
<comment type="subcellular location">
    <subcellularLocation>
        <location evidence="1">Cytoplasm</location>
    </subcellularLocation>
</comment>
<comment type="similarity">
    <text evidence="1">Belongs to the methyltransferase superfamily. RsmH family.</text>
</comment>
<protein>
    <recommendedName>
        <fullName evidence="1">Ribosomal RNA small subunit methyltransferase H</fullName>
        <ecNumber evidence="1">2.1.1.199</ecNumber>
    </recommendedName>
    <alternativeName>
        <fullName evidence="1">16S rRNA m(4)C1402 methyltransferase</fullName>
    </alternativeName>
    <alternativeName>
        <fullName evidence="1">rRNA (cytosine-N(4)-)-methyltransferase RsmH</fullName>
    </alternativeName>
</protein>
<gene>
    <name evidence="1" type="primary">rsmH</name>
    <name type="synonym">mraW</name>
    <name type="ordered locus">Pput_4395</name>
</gene>
<proteinExistence type="inferred from homology"/>
<sequence>MTIDSGFNHITVLLDEAVEALALRADGCYLDGTFGRGGHSRLILSKLGPQGRLLGFDKDPQAIATGQALAAEDGRFVIVQRSFAELGAEVAARGLHGKVSGVLLDLGVSSPQLDDPERGFSFLNDGPLDMRMNPDQGISAAEFIATAPVEEIARVFKEYGEERFAGRMARAVVERREKQPFTRTADLAEVLKVANPAWEKGKNPATRAFQGLRIHVNNELGDLEAGLEAALDALEVGGRLAVISFHSLEDRIVKLFMRKLVKGEADNLPRNLPVQHKVFEPKIKLIGKAQFASEAELKANPRSRSAVMRVAEKLR</sequence>